<protein>
    <recommendedName>
        <fullName evidence="1">Ribosomal RNA small subunit methyltransferase H</fullName>
        <ecNumber evidence="1">2.1.1.199</ecNumber>
    </recommendedName>
    <alternativeName>
        <fullName evidence="1">16S rRNA m(4)C1402 methyltransferase</fullName>
    </alternativeName>
    <alternativeName>
        <fullName evidence="1">rRNA (cytosine-N(4)-)-methyltransferase RsmH</fullName>
    </alternativeName>
</protein>
<dbReference type="EC" id="2.1.1.199" evidence="1"/>
<dbReference type="EMBL" id="AP009044">
    <property type="protein sequence ID" value="BAF55047.1"/>
    <property type="molecule type" value="Genomic_DNA"/>
</dbReference>
<dbReference type="RefSeq" id="WP_011897567.1">
    <property type="nucleotide sequence ID" value="NC_009342.1"/>
</dbReference>
<dbReference type="SMR" id="A4QFN1"/>
<dbReference type="KEGG" id="cgt:cgR_2048"/>
<dbReference type="HOGENOM" id="CLU_038422_0_0_11"/>
<dbReference type="PhylomeDB" id="A4QFN1"/>
<dbReference type="Proteomes" id="UP000006698">
    <property type="component" value="Chromosome"/>
</dbReference>
<dbReference type="GO" id="GO:0005737">
    <property type="term" value="C:cytoplasm"/>
    <property type="evidence" value="ECO:0007669"/>
    <property type="project" value="UniProtKB-SubCell"/>
</dbReference>
<dbReference type="GO" id="GO:0071424">
    <property type="term" value="F:rRNA (cytosine-N4-)-methyltransferase activity"/>
    <property type="evidence" value="ECO:0007669"/>
    <property type="project" value="UniProtKB-UniRule"/>
</dbReference>
<dbReference type="GO" id="GO:0070475">
    <property type="term" value="P:rRNA base methylation"/>
    <property type="evidence" value="ECO:0007669"/>
    <property type="project" value="UniProtKB-UniRule"/>
</dbReference>
<dbReference type="FunFam" id="1.10.150.170:FF:000001">
    <property type="entry name" value="Ribosomal RNA small subunit methyltransferase H"/>
    <property type="match status" value="1"/>
</dbReference>
<dbReference type="Gene3D" id="1.10.150.170">
    <property type="entry name" value="Putative methyltransferase TM0872, insert domain"/>
    <property type="match status" value="1"/>
</dbReference>
<dbReference type="Gene3D" id="3.40.50.150">
    <property type="entry name" value="Vaccinia Virus protein VP39"/>
    <property type="match status" value="1"/>
</dbReference>
<dbReference type="HAMAP" id="MF_01007">
    <property type="entry name" value="16SrRNA_methyltr_H"/>
    <property type="match status" value="1"/>
</dbReference>
<dbReference type="InterPro" id="IPR002903">
    <property type="entry name" value="RsmH"/>
</dbReference>
<dbReference type="InterPro" id="IPR023397">
    <property type="entry name" value="SAM-dep_MeTrfase_MraW_recog"/>
</dbReference>
<dbReference type="InterPro" id="IPR029063">
    <property type="entry name" value="SAM-dependent_MTases_sf"/>
</dbReference>
<dbReference type="NCBIfam" id="TIGR00006">
    <property type="entry name" value="16S rRNA (cytosine(1402)-N(4))-methyltransferase RsmH"/>
    <property type="match status" value="1"/>
</dbReference>
<dbReference type="PANTHER" id="PTHR11265:SF0">
    <property type="entry name" value="12S RRNA N4-METHYLCYTIDINE METHYLTRANSFERASE"/>
    <property type="match status" value="1"/>
</dbReference>
<dbReference type="PANTHER" id="PTHR11265">
    <property type="entry name" value="S-ADENOSYL-METHYLTRANSFERASE MRAW"/>
    <property type="match status" value="1"/>
</dbReference>
<dbReference type="Pfam" id="PF01795">
    <property type="entry name" value="Methyltransf_5"/>
    <property type="match status" value="1"/>
</dbReference>
<dbReference type="PIRSF" id="PIRSF004486">
    <property type="entry name" value="MraW"/>
    <property type="match status" value="1"/>
</dbReference>
<dbReference type="SUPFAM" id="SSF81799">
    <property type="entry name" value="Putative methyltransferase TM0872, insert domain"/>
    <property type="match status" value="1"/>
</dbReference>
<dbReference type="SUPFAM" id="SSF53335">
    <property type="entry name" value="S-adenosyl-L-methionine-dependent methyltransferases"/>
    <property type="match status" value="1"/>
</dbReference>
<sequence length="337" mass="36800">MEDFSLDGNHGHVPVMRDRMAALIAENVEALGENAVIVDATLGAGGHAEFFLNTFPKARLIGLDRDQNALRDARARLAPFGERFIGVQTRFDGLREVLESVEGDIIDLAREHGIAGALFDLGVSSMQLDQVERGFAYRTDAPLDMRMDATQGITAADILNTYSHGDIARILKTYGDERFAGKIASAVLKEREKEPFTTSARLVELLYDAIPAATRRTGGHPAKRTFQALRVEVNNELDSLKNVLPQITDALNVGGRAVFMSYQSHEDKLVKKFFTDLTTSKTPPGLPVDLPGTAPQFKQVTRGAETASEAEIEENPRAAPVKVRAIERIANNSGDLS</sequence>
<comment type="function">
    <text evidence="1">Specifically methylates the N4 position of cytidine in position 1402 (C1402) of 16S rRNA.</text>
</comment>
<comment type="catalytic activity">
    <reaction evidence="1">
        <text>cytidine(1402) in 16S rRNA + S-adenosyl-L-methionine = N(4)-methylcytidine(1402) in 16S rRNA + S-adenosyl-L-homocysteine + H(+)</text>
        <dbReference type="Rhea" id="RHEA:42928"/>
        <dbReference type="Rhea" id="RHEA-COMP:10286"/>
        <dbReference type="Rhea" id="RHEA-COMP:10287"/>
        <dbReference type="ChEBI" id="CHEBI:15378"/>
        <dbReference type="ChEBI" id="CHEBI:57856"/>
        <dbReference type="ChEBI" id="CHEBI:59789"/>
        <dbReference type="ChEBI" id="CHEBI:74506"/>
        <dbReference type="ChEBI" id="CHEBI:82748"/>
        <dbReference type="EC" id="2.1.1.199"/>
    </reaction>
</comment>
<comment type="subcellular location">
    <subcellularLocation>
        <location evidence="1">Cytoplasm</location>
    </subcellularLocation>
</comment>
<comment type="similarity">
    <text evidence="1">Belongs to the methyltransferase superfamily. RsmH family.</text>
</comment>
<keyword id="KW-0963">Cytoplasm</keyword>
<keyword id="KW-0489">Methyltransferase</keyword>
<keyword id="KW-0698">rRNA processing</keyword>
<keyword id="KW-0949">S-adenosyl-L-methionine</keyword>
<keyword id="KW-0808">Transferase</keyword>
<accession>A4QFN1</accession>
<evidence type="ECO:0000255" key="1">
    <source>
        <dbReference type="HAMAP-Rule" id="MF_01007"/>
    </source>
</evidence>
<proteinExistence type="inferred from homology"/>
<feature type="chain" id="PRO_0000386828" description="Ribosomal RNA small subunit methyltransferase H">
    <location>
        <begin position="1"/>
        <end position="337"/>
    </location>
</feature>
<feature type="binding site" evidence="1">
    <location>
        <begin position="45"/>
        <end position="47"/>
    </location>
    <ligand>
        <name>S-adenosyl-L-methionine</name>
        <dbReference type="ChEBI" id="CHEBI:59789"/>
    </ligand>
</feature>
<feature type="binding site" evidence="1">
    <location>
        <position position="64"/>
    </location>
    <ligand>
        <name>S-adenosyl-L-methionine</name>
        <dbReference type="ChEBI" id="CHEBI:59789"/>
    </ligand>
</feature>
<feature type="binding site" evidence="1">
    <location>
        <position position="91"/>
    </location>
    <ligand>
        <name>S-adenosyl-L-methionine</name>
        <dbReference type="ChEBI" id="CHEBI:59789"/>
    </ligand>
</feature>
<feature type="binding site" evidence="1">
    <location>
        <position position="120"/>
    </location>
    <ligand>
        <name>S-adenosyl-L-methionine</name>
        <dbReference type="ChEBI" id="CHEBI:59789"/>
    </ligand>
</feature>
<feature type="binding site" evidence="1">
    <location>
        <position position="127"/>
    </location>
    <ligand>
        <name>S-adenosyl-L-methionine</name>
        <dbReference type="ChEBI" id="CHEBI:59789"/>
    </ligand>
</feature>
<gene>
    <name evidence="1" type="primary">rsmH</name>
    <name type="synonym">mraW</name>
    <name type="ordered locus">cgR_2048</name>
</gene>
<organism>
    <name type="scientific">Corynebacterium glutamicum (strain R)</name>
    <dbReference type="NCBI Taxonomy" id="340322"/>
    <lineage>
        <taxon>Bacteria</taxon>
        <taxon>Bacillati</taxon>
        <taxon>Actinomycetota</taxon>
        <taxon>Actinomycetes</taxon>
        <taxon>Mycobacteriales</taxon>
        <taxon>Corynebacteriaceae</taxon>
        <taxon>Corynebacterium</taxon>
    </lineage>
</organism>
<reference key="1">
    <citation type="journal article" date="2007" name="Microbiology">
        <title>Comparative analysis of the Corynebacterium glutamicum group and complete genome sequence of strain R.</title>
        <authorList>
            <person name="Yukawa H."/>
            <person name="Omumasaba C.A."/>
            <person name="Nonaka H."/>
            <person name="Kos P."/>
            <person name="Okai N."/>
            <person name="Suzuki N."/>
            <person name="Suda M."/>
            <person name="Tsuge Y."/>
            <person name="Watanabe J."/>
            <person name="Ikeda Y."/>
            <person name="Vertes A.A."/>
            <person name="Inui M."/>
        </authorList>
    </citation>
    <scope>NUCLEOTIDE SEQUENCE [LARGE SCALE GENOMIC DNA]</scope>
    <source>
        <strain>R</strain>
    </source>
</reference>
<name>RSMH_CORGB</name>